<keyword id="KW-0256">Endoplasmic reticulum</keyword>
<keyword id="KW-0931">ER-Golgi transport</keyword>
<keyword id="KW-0472">Membrane</keyword>
<keyword id="KW-0653">Protein transport</keyword>
<keyword id="KW-0675">Receptor</keyword>
<keyword id="KW-1185">Reference proteome</keyword>
<keyword id="KW-0812">Transmembrane</keyword>
<keyword id="KW-1133">Transmembrane helix</keyword>
<keyword id="KW-0813">Transport</keyword>
<accession>O76767</accession>
<accession>A4V0K0</accession>
<accession>Q9VKW0</accession>
<feature type="chain" id="PRO_0000194163" description="ER lumen protein-retaining receptor">
    <location>
        <begin position="1"/>
        <end position="212"/>
    </location>
</feature>
<feature type="topological domain" description="Lumenal" evidence="2">
    <location>
        <begin position="1"/>
        <end position="2"/>
    </location>
</feature>
<feature type="transmembrane region" description="Helical" evidence="2">
    <location>
        <begin position="3"/>
        <end position="21"/>
    </location>
</feature>
<feature type="topological domain" description="Cytoplasmic" evidence="2">
    <location>
        <begin position="22"/>
        <end position="35"/>
    </location>
</feature>
<feature type="transmembrane region" description="Helical" evidence="2">
    <location>
        <begin position="36"/>
        <end position="53"/>
    </location>
</feature>
<feature type="topological domain" description="Lumenal" evidence="2">
    <location>
        <begin position="54"/>
        <end position="61"/>
    </location>
</feature>
<feature type="transmembrane region" description="Helical" evidence="2">
    <location>
        <begin position="62"/>
        <end position="80"/>
    </location>
</feature>
<feature type="topological domain" description="Cytoplasmic" evidence="2">
    <location>
        <begin position="81"/>
        <end position="96"/>
    </location>
</feature>
<feature type="transmembrane region" description="Helical" evidence="2">
    <location>
        <begin position="97"/>
        <end position="110"/>
    </location>
</feature>
<feature type="topological domain" description="Lumenal" evidence="2">
    <location>
        <begin position="111"/>
        <end position="117"/>
    </location>
</feature>
<feature type="transmembrane region" description="Helical" evidence="2">
    <location>
        <begin position="118"/>
        <end position="137"/>
    </location>
</feature>
<feature type="topological domain" description="Cytoplasmic" evidence="2">
    <location>
        <begin position="138"/>
        <end position="149"/>
    </location>
</feature>
<feature type="transmembrane region" description="Helical" evidence="2">
    <location>
        <begin position="150"/>
        <end position="168"/>
    </location>
</feature>
<feature type="topological domain" description="Lumenal" evidence="2">
    <location>
        <begin position="169"/>
        <end position="178"/>
    </location>
</feature>
<feature type="transmembrane region" description="Helical" evidence="2">
    <location>
        <begin position="179"/>
        <end position="199"/>
    </location>
</feature>
<feature type="topological domain" description="Cytoplasmic" evidence="2">
    <location>
        <begin position="200"/>
        <end position="212"/>
    </location>
</feature>
<evidence type="ECO:0000250" key="1"/>
<evidence type="ECO:0000255" key="2"/>
<evidence type="ECO:0000305" key="3"/>
<name>ERD2_DROME</name>
<gene>
    <name type="primary">KdelR</name>
    <name type="synonym">Erd2</name>
    <name type="ORF">CG5183</name>
</gene>
<reference key="1">
    <citation type="submission" date="1998-07" db="EMBL/GenBank/DDBJ databases">
        <title>Cloning and expression of a D. melanogaster ERD2 cDNA.</title>
        <authorList>
            <person name="Banfield D.K."/>
            <person name="Pelham H.R.B."/>
        </authorList>
    </citation>
    <scope>NUCLEOTIDE SEQUENCE [MRNA]</scope>
    <source>
        <tissue>Embryo</tissue>
    </source>
</reference>
<reference key="2">
    <citation type="journal article" date="2000" name="Science">
        <title>The genome sequence of Drosophila melanogaster.</title>
        <authorList>
            <person name="Adams M.D."/>
            <person name="Celniker S.E."/>
            <person name="Holt R.A."/>
            <person name="Evans C.A."/>
            <person name="Gocayne J.D."/>
            <person name="Amanatides P.G."/>
            <person name="Scherer S.E."/>
            <person name="Li P.W."/>
            <person name="Hoskins R.A."/>
            <person name="Galle R.F."/>
            <person name="George R.A."/>
            <person name="Lewis S.E."/>
            <person name="Richards S."/>
            <person name="Ashburner M."/>
            <person name="Henderson S.N."/>
            <person name="Sutton G.G."/>
            <person name="Wortman J.R."/>
            <person name="Yandell M.D."/>
            <person name="Zhang Q."/>
            <person name="Chen L.X."/>
            <person name="Brandon R.C."/>
            <person name="Rogers Y.-H.C."/>
            <person name="Blazej R.G."/>
            <person name="Champe M."/>
            <person name="Pfeiffer B.D."/>
            <person name="Wan K.H."/>
            <person name="Doyle C."/>
            <person name="Baxter E.G."/>
            <person name="Helt G."/>
            <person name="Nelson C.R."/>
            <person name="Miklos G.L.G."/>
            <person name="Abril J.F."/>
            <person name="Agbayani A."/>
            <person name="An H.-J."/>
            <person name="Andrews-Pfannkoch C."/>
            <person name="Baldwin D."/>
            <person name="Ballew R.M."/>
            <person name="Basu A."/>
            <person name="Baxendale J."/>
            <person name="Bayraktaroglu L."/>
            <person name="Beasley E.M."/>
            <person name="Beeson K.Y."/>
            <person name="Benos P.V."/>
            <person name="Berman B.P."/>
            <person name="Bhandari D."/>
            <person name="Bolshakov S."/>
            <person name="Borkova D."/>
            <person name="Botchan M.R."/>
            <person name="Bouck J."/>
            <person name="Brokstein P."/>
            <person name="Brottier P."/>
            <person name="Burtis K.C."/>
            <person name="Busam D.A."/>
            <person name="Butler H."/>
            <person name="Cadieu E."/>
            <person name="Center A."/>
            <person name="Chandra I."/>
            <person name="Cherry J.M."/>
            <person name="Cawley S."/>
            <person name="Dahlke C."/>
            <person name="Davenport L.B."/>
            <person name="Davies P."/>
            <person name="de Pablos B."/>
            <person name="Delcher A."/>
            <person name="Deng Z."/>
            <person name="Mays A.D."/>
            <person name="Dew I."/>
            <person name="Dietz S.M."/>
            <person name="Dodson K."/>
            <person name="Doup L.E."/>
            <person name="Downes M."/>
            <person name="Dugan-Rocha S."/>
            <person name="Dunkov B.C."/>
            <person name="Dunn P."/>
            <person name="Durbin K.J."/>
            <person name="Evangelista C.C."/>
            <person name="Ferraz C."/>
            <person name="Ferriera S."/>
            <person name="Fleischmann W."/>
            <person name="Fosler C."/>
            <person name="Gabrielian A.E."/>
            <person name="Garg N.S."/>
            <person name="Gelbart W.M."/>
            <person name="Glasser K."/>
            <person name="Glodek A."/>
            <person name="Gong F."/>
            <person name="Gorrell J.H."/>
            <person name="Gu Z."/>
            <person name="Guan P."/>
            <person name="Harris M."/>
            <person name="Harris N.L."/>
            <person name="Harvey D.A."/>
            <person name="Heiman T.J."/>
            <person name="Hernandez J.R."/>
            <person name="Houck J."/>
            <person name="Hostin D."/>
            <person name="Houston K.A."/>
            <person name="Howland T.J."/>
            <person name="Wei M.-H."/>
            <person name="Ibegwam C."/>
            <person name="Jalali M."/>
            <person name="Kalush F."/>
            <person name="Karpen G.H."/>
            <person name="Ke Z."/>
            <person name="Kennison J.A."/>
            <person name="Ketchum K.A."/>
            <person name="Kimmel B.E."/>
            <person name="Kodira C.D."/>
            <person name="Kraft C.L."/>
            <person name="Kravitz S."/>
            <person name="Kulp D."/>
            <person name="Lai Z."/>
            <person name="Lasko P."/>
            <person name="Lei Y."/>
            <person name="Levitsky A.A."/>
            <person name="Li J.H."/>
            <person name="Li Z."/>
            <person name="Liang Y."/>
            <person name="Lin X."/>
            <person name="Liu X."/>
            <person name="Mattei B."/>
            <person name="McIntosh T.C."/>
            <person name="McLeod M.P."/>
            <person name="McPherson D."/>
            <person name="Merkulov G."/>
            <person name="Milshina N.V."/>
            <person name="Mobarry C."/>
            <person name="Morris J."/>
            <person name="Moshrefi A."/>
            <person name="Mount S.M."/>
            <person name="Moy M."/>
            <person name="Murphy B."/>
            <person name="Murphy L."/>
            <person name="Muzny D.M."/>
            <person name="Nelson D.L."/>
            <person name="Nelson D.R."/>
            <person name="Nelson K.A."/>
            <person name="Nixon K."/>
            <person name="Nusskern D.R."/>
            <person name="Pacleb J.M."/>
            <person name="Palazzolo M."/>
            <person name="Pittman G.S."/>
            <person name="Pan S."/>
            <person name="Pollard J."/>
            <person name="Puri V."/>
            <person name="Reese M.G."/>
            <person name="Reinert K."/>
            <person name="Remington K."/>
            <person name="Saunders R.D.C."/>
            <person name="Scheeler F."/>
            <person name="Shen H."/>
            <person name="Shue B.C."/>
            <person name="Siden-Kiamos I."/>
            <person name="Simpson M."/>
            <person name="Skupski M.P."/>
            <person name="Smith T.J."/>
            <person name="Spier E."/>
            <person name="Spradling A.C."/>
            <person name="Stapleton M."/>
            <person name="Strong R."/>
            <person name="Sun E."/>
            <person name="Svirskas R."/>
            <person name="Tector C."/>
            <person name="Turner R."/>
            <person name="Venter E."/>
            <person name="Wang A.H."/>
            <person name="Wang X."/>
            <person name="Wang Z.-Y."/>
            <person name="Wassarman D.A."/>
            <person name="Weinstock G.M."/>
            <person name="Weissenbach J."/>
            <person name="Williams S.M."/>
            <person name="Woodage T."/>
            <person name="Worley K.C."/>
            <person name="Wu D."/>
            <person name="Yang S."/>
            <person name="Yao Q.A."/>
            <person name="Ye J."/>
            <person name="Yeh R.-F."/>
            <person name="Zaveri J.S."/>
            <person name="Zhan M."/>
            <person name="Zhang G."/>
            <person name="Zhao Q."/>
            <person name="Zheng L."/>
            <person name="Zheng X.H."/>
            <person name="Zhong F.N."/>
            <person name="Zhong W."/>
            <person name="Zhou X."/>
            <person name="Zhu S.C."/>
            <person name="Zhu X."/>
            <person name="Smith H.O."/>
            <person name="Gibbs R.A."/>
            <person name="Myers E.W."/>
            <person name="Rubin G.M."/>
            <person name="Venter J.C."/>
        </authorList>
    </citation>
    <scope>NUCLEOTIDE SEQUENCE [LARGE SCALE GENOMIC DNA]</scope>
    <source>
        <strain>Berkeley</strain>
    </source>
</reference>
<reference key="3">
    <citation type="journal article" date="2002" name="Genome Biol.">
        <title>Annotation of the Drosophila melanogaster euchromatic genome: a systematic review.</title>
        <authorList>
            <person name="Misra S."/>
            <person name="Crosby M.A."/>
            <person name="Mungall C.J."/>
            <person name="Matthews B.B."/>
            <person name="Campbell K.S."/>
            <person name="Hradecky P."/>
            <person name="Huang Y."/>
            <person name="Kaminker J.S."/>
            <person name="Millburn G.H."/>
            <person name="Prochnik S.E."/>
            <person name="Smith C.D."/>
            <person name="Tupy J.L."/>
            <person name="Whitfield E.J."/>
            <person name="Bayraktaroglu L."/>
            <person name="Berman B.P."/>
            <person name="Bettencourt B.R."/>
            <person name="Celniker S.E."/>
            <person name="de Grey A.D.N.J."/>
            <person name="Drysdale R.A."/>
            <person name="Harris N.L."/>
            <person name="Richter J."/>
            <person name="Russo S."/>
            <person name="Schroeder A.J."/>
            <person name="Shu S.Q."/>
            <person name="Stapleton M."/>
            <person name="Yamada C."/>
            <person name="Ashburner M."/>
            <person name="Gelbart W.M."/>
            <person name="Rubin G.M."/>
            <person name="Lewis S.E."/>
        </authorList>
    </citation>
    <scope>GENOME REANNOTATION</scope>
    <source>
        <strain>Berkeley</strain>
    </source>
</reference>
<reference key="4">
    <citation type="journal article" date="2000" name="Science">
        <title>A Drosophila complementary DNA resource.</title>
        <authorList>
            <person name="Rubin G.M."/>
            <person name="Hong L."/>
            <person name="Brokstein P."/>
            <person name="Evans-Holm M."/>
            <person name="Frise E."/>
            <person name="Stapleton M."/>
            <person name="Harvey D.A."/>
        </authorList>
    </citation>
    <scope>NUCLEOTIDE SEQUENCE [LARGE SCALE MRNA]</scope>
    <source>
        <strain>Berkeley</strain>
        <tissue>Embryo</tissue>
    </source>
</reference>
<comment type="function">
    <text evidence="1">Required for the retention of luminal endoplasmic reticulum proteins. Determines the specificity of the luminal ER protein retention system. Also required for normal vesicular traffic through the Golgi (By similarity).</text>
</comment>
<comment type="subcellular location">
    <subcellularLocation>
        <location>Endoplasmic reticulum membrane</location>
        <topology>Multi-pass membrane protein</topology>
    </subcellularLocation>
</comment>
<comment type="similarity">
    <text evidence="3">Belongs to the ERD2 family.</text>
</comment>
<dbReference type="EMBL" id="AF081126">
    <property type="protein sequence ID" value="AAC31955.1"/>
    <property type="molecule type" value="mRNA"/>
</dbReference>
<dbReference type="EMBL" id="AE014134">
    <property type="protein sequence ID" value="AAF52948.1"/>
    <property type="molecule type" value="Genomic_DNA"/>
</dbReference>
<dbReference type="EMBL" id="AE014134">
    <property type="protein sequence ID" value="AAN10752.1"/>
    <property type="molecule type" value="Genomic_DNA"/>
</dbReference>
<dbReference type="EMBL" id="AE014134">
    <property type="protein sequence ID" value="AAN10753.1"/>
    <property type="molecule type" value="Genomic_DNA"/>
</dbReference>
<dbReference type="EMBL" id="AF132559">
    <property type="protein sequence ID" value="AAD27858.1"/>
    <property type="molecule type" value="mRNA"/>
</dbReference>
<dbReference type="RefSeq" id="NP_477296.1">
    <property type="nucleotide sequence ID" value="NM_057948.3"/>
</dbReference>
<dbReference type="RefSeq" id="NP_723586.1">
    <property type="nucleotide sequence ID" value="NM_164927.2"/>
</dbReference>
<dbReference type="RefSeq" id="NP_723587.1">
    <property type="nucleotide sequence ID" value="NM_164928.3"/>
</dbReference>
<dbReference type="SMR" id="O76767"/>
<dbReference type="BioGRID" id="60508">
    <property type="interactions" value="44"/>
</dbReference>
<dbReference type="DIP" id="DIP-22035N"/>
<dbReference type="FunCoup" id="O76767">
    <property type="interactions" value="949"/>
</dbReference>
<dbReference type="IntAct" id="O76767">
    <property type="interactions" value="103"/>
</dbReference>
<dbReference type="STRING" id="7227.FBpp0079613"/>
<dbReference type="PaxDb" id="7227-FBpp0079613"/>
<dbReference type="DNASU" id="34427"/>
<dbReference type="EnsemblMetazoa" id="FBtr0080021">
    <property type="protein sequence ID" value="FBpp0079611"/>
    <property type="gene ID" value="FBgn0267330"/>
</dbReference>
<dbReference type="EnsemblMetazoa" id="FBtr0080022">
    <property type="protein sequence ID" value="FBpp0079612"/>
    <property type="gene ID" value="FBgn0267330"/>
</dbReference>
<dbReference type="EnsemblMetazoa" id="FBtr0080023">
    <property type="protein sequence ID" value="FBpp0079613"/>
    <property type="gene ID" value="FBgn0267330"/>
</dbReference>
<dbReference type="GeneID" id="34427"/>
<dbReference type="KEGG" id="dme:Dmel_CG5183"/>
<dbReference type="AGR" id="FB:FBgn0267330"/>
<dbReference type="CTD" id="34427"/>
<dbReference type="FlyBase" id="FBgn0267330">
    <property type="gene designation" value="KdelR"/>
</dbReference>
<dbReference type="VEuPathDB" id="VectorBase:FBgn0267330"/>
<dbReference type="eggNOG" id="KOG3106">
    <property type="taxonomic scope" value="Eukaryota"/>
</dbReference>
<dbReference type="GeneTree" id="ENSGT00390000004010"/>
<dbReference type="HOGENOM" id="CLU_057784_0_0_1"/>
<dbReference type="InParanoid" id="O76767"/>
<dbReference type="OMA" id="WKSRSCE"/>
<dbReference type="OrthoDB" id="7694678at2759"/>
<dbReference type="PhylomeDB" id="O76767"/>
<dbReference type="Reactome" id="R-DME-6807878">
    <property type="pathway name" value="COPI-mediated anterograde transport"/>
</dbReference>
<dbReference type="Reactome" id="R-DME-6811434">
    <property type="pathway name" value="COPI-dependent Golgi-to-ER retrograde traffic"/>
</dbReference>
<dbReference type="BioGRID-ORCS" id="34427">
    <property type="hits" value="1 hit in 3 CRISPR screens"/>
</dbReference>
<dbReference type="GenomeRNAi" id="34427"/>
<dbReference type="PRO" id="PR:O76767"/>
<dbReference type="Proteomes" id="UP000000803">
    <property type="component" value="Chromosome 2L"/>
</dbReference>
<dbReference type="Bgee" id="FBgn0267330">
    <property type="expression patterns" value="Expressed in spermathecum and 251 other cell types or tissues"/>
</dbReference>
<dbReference type="GO" id="GO:0005801">
    <property type="term" value="C:cis-Golgi network"/>
    <property type="evidence" value="ECO:0000318"/>
    <property type="project" value="GO_Central"/>
</dbReference>
<dbReference type="GO" id="GO:0005783">
    <property type="term" value="C:endoplasmic reticulum"/>
    <property type="evidence" value="ECO:0000250"/>
    <property type="project" value="FlyBase"/>
</dbReference>
<dbReference type="GO" id="GO:0005789">
    <property type="term" value="C:endoplasmic reticulum membrane"/>
    <property type="evidence" value="ECO:0007669"/>
    <property type="project" value="UniProtKB-SubCell"/>
</dbReference>
<dbReference type="GO" id="GO:0046923">
    <property type="term" value="F:ER retention sequence binding"/>
    <property type="evidence" value="ECO:0000318"/>
    <property type="project" value="GO_Central"/>
</dbReference>
<dbReference type="GO" id="GO:0005046">
    <property type="term" value="F:KDEL sequence binding"/>
    <property type="evidence" value="ECO:0000250"/>
    <property type="project" value="FlyBase"/>
</dbReference>
<dbReference type="GO" id="GO:0006621">
    <property type="term" value="P:protein retention in ER lumen"/>
    <property type="evidence" value="ECO:0000315"/>
    <property type="project" value="FlyBase"/>
</dbReference>
<dbReference type="GO" id="GO:0015031">
    <property type="term" value="P:protein transport"/>
    <property type="evidence" value="ECO:0007669"/>
    <property type="project" value="UniProtKB-KW"/>
</dbReference>
<dbReference type="GO" id="GO:0016192">
    <property type="term" value="P:vesicle-mediated transport"/>
    <property type="evidence" value="ECO:0007669"/>
    <property type="project" value="UniProtKB-KW"/>
</dbReference>
<dbReference type="InterPro" id="IPR000133">
    <property type="entry name" value="ER_ret_rcpt"/>
</dbReference>
<dbReference type="PANTHER" id="PTHR10585">
    <property type="entry name" value="ER LUMEN PROTEIN RETAINING RECEPTOR"/>
    <property type="match status" value="1"/>
</dbReference>
<dbReference type="Pfam" id="PF00810">
    <property type="entry name" value="ER_lumen_recept"/>
    <property type="match status" value="1"/>
</dbReference>
<dbReference type="PRINTS" id="PR00660">
    <property type="entry name" value="ERLUMENR"/>
</dbReference>
<dbReference type="PROSITE" id="PS00951">
    <property type="entry name" value="ER_LUMEN_RECEPTOR_1"/>
    <property type="match status" value="1"/>
</dbReference>
<dbReference type="PROSITE" id="PS00952">
    <property type="entry name" value="ER_LUMEN_RECEPTOR_2"/>
    <property type="match status" value="1"/>
</dbReference>
<proteinExistence type="evidence at transcript level"/>
<sequence length="212" mass="24482">MNIFRFAGDLSHVFAIIILLLKIWKTRSCAGISGKSQILFAVVYLTRYLDLFTTYVSLYNSVMKVLFLATSGATVYLMYVKFKATYDHNHDSFRIEFLLVPCALLSLVINHEFTVMEVLWTFSIYLESVAILPQLFLVSRTGEAESITSHYLFALGSYRALYLLNWVYRYMVESHYDLIAIFAGVVQTVLYCDFFYLYITKVLKGKKLQLPA</sequence>
<organism>
    <name type="scientific">Drosophila melanogaster</name>
    <name type="common">Fruit fly</name>
    <dbReference type="NCBI Taxonomy" id="7227"/>
    <lineage>
        <taxon>Eukaryota</taxon>
        <taxon>Metazoa</taxon>
        <taxon>Ecdysozoa</taxon>
        <taxon>Arthropoda</taxon>
        <taxon>Hexapoda</taxon>
        <taxon>Insecta</taxon>
        <taxon>Pterygota</taxon>
        <taxon>Neoptera</taxon>
        <taxon>Endopterygota</taxon>
        <taxon>Diptera</taxon>
        <taxon>Brachycera</taxon>
        <taxon>Muscomorpha</taxon>
        <taxon>Ephydroidea</taxon>
        <taxon>Drosophilidae</taxon>
        <taxon>Drosophila</taxon>
        <taxon>Sophophora</taxon>
    </lineage>
</organism>
<protein>
    <recommendedName>
        <fullName>ER lumen protein-retaining receptor</fullName>
    </recommendedName>
</protein>